<name>ISPD_BURMS</name>
<gene>
    <name evidence="1" type="primary">ispD</name>
    <name type="ordered locus">BMASAVP1_A1987</name>
</gene>
<organism>
    <name type="scientific">Burkholderia mallei (strain SAVP1)</name>
    <dbReference type="NCBI Taxonomy" id="320388"/>
    <lineage>
        <taxon>Bacteria</taxon>
        <taxon>Pseudomonadati</taxon>
        <taxon>Pseudomonadota</taxon>
        <taxon>Betaproteobacteria</taxon>
        <taxon>Burkholderiales</taxon>
        <taxon>Burkholderiaceae</taxon>
        <taxon>Burkholderia</taxon>
        <taxon>pseudomallei group</taxon>
    </lineage>
</organism>
<sequence>MTSRLFALIPCAGTGSRSGSALPKQYRTLAGRALLHYTLAAFDACSEFAQTLVVISPDDAHFDARRFAGLRFAVRRCGGASRQASVMNGLIQLAEFGATDADWVLVHDAARPGITPALIRTLIGALKDDPVGGIVALPVADTLKRVPAGGDAIERTESRNGLWQAQTPQMFRIGMLRDAIRRAQLDGHDLTDEASAIEWAGHTPRVVQGSLRNFKVTYPEDFDLAEAILAQPARAS</sequence>
<feature type="chain" id="PRO_1000022906" description="2-C-methyl-D-erythritol 4-phosphate cytidylyltransferase">
    <location>
        <begin position="1"/>
        <end position="236"/>
    </location>
</feature>
<feature type="site" description="Transition state stabilizer" evidence="1">
    <location>
        <position position="17"/>
    </location>
</feature>
<feature type="site" description="Transition state stabilizer" evidence="1">
    <location>
        <position position="24"/>
    </location>
</feature>
<feature type="site" description="Positions MEP for the nucleophilic attack" evidence="1">
    <location>
        <position position="159"/>
    </location>
</feature>
<feature type="site" description="Positions MEP for the nucleophilic attack" evidence="1">
    <location>
        <position position="215"/>
    </location>
</feature>
<accession>A1V500</accession>
<evidence type="ECO:0000255" key="1">
    <source>
        <dbReference type="HAMAP-Rule" id="MF_00108"/>
    </source>
</evidence>
<reference key="1">
    <citation type="journal article" date="2010" name="Genome Biol. Evol.">
        <title>Continuing evolution of Burkholderia mallei through genome reduction and large-scale rearrangements.</title>
        <authorList>
            <person name="Losada L."/>
            <person name="Ronning C.M."/>
            <person name="DeShazer D."/>
            <person name="Woods D."/>
            <person name="Fedorova N."/>
            <person name="Kim H.S."/>
            <person name="Shabalina S.A."/>
            <person name="Pearson T.R."/>
            <person name="Brinkac L."/>
            <person name="Tan P."/>
            <person name="Nandi T."/>
            <person name="Crabtree J."/>
            <person name="Badger J."/>
            <person name="Beckstrom-Sternberg S."/>
            <person name="Saqib M."/>
            <person name="Schutzer S.E."/>
            <person name="Keim P."/>
            <person name="Nierman W.C."/>
        </authorList>
    </citation>
    <scope>NUCLEOTIDE SEQUENCE [LARGE SCALE GENOMIC DNA]</scope>
    <source>
        <strain>SAVP1</strain>
    </source>
</reference>
<comment type="function">
    <text evidence="1">Catalyzes the formation of 4-diphosphocytidyl-2-C-methyl-D-erythritol from CTP and 2-C-methyl-D-erythritol 4-phosphate (MEP).</text>
</comment>
<comment type="catalytic activity">
    <reaction evidence="1">
        <text>2-C-methyl-D-erythritol 4-phosphate + CTP + H(+) = 4-CDP-2-C-methyl-D-erythritol + diphosphate</text>
        <dbReference type="Rhea" id="RHEA:13429"/>
        <dbReference type="ChEBI" id="CHEBI:15378"/>
        <dbReference type="ChEBI" id="CHEBI:33019"/>
        <dbReference type="ChEBI" id="CHEBI:37563"/>
        <dbReference type="ChEBI" id="CHEBI:57823"/>
        <dbReference type="ChEBI" id="CHEBI:58262"/>
        <dbReference type="EC" id="2.7.7.60"/>
    </reaction>
</comment>
<comment type="pathway">
    <text evidence="1">Isoprenoid biosynthesis; isopentenyl diphosphate biosynthesis via DXP pathway; isopentenyl diphosphate from 1-deoxy-D-xylulose 5-phosphate: step 2/6.</text>
</comment>
<comment type="similarity">
    <text evidence="1">Belongs to the IspD/TarI cytidylyltransferase family. IspD subfamily.</text>
</comment>
<proteinExistence type="inferred from homology"/>
<protein>
    <recommendedName>
        <fullName evidence="1">2-C-methyl-D-erythritol 4-phosphate cytidylyltransferase</fullName>
        <ecNumber evidence="1">2.7.7.60</ecNumber>
    </recommendedName>
    <alternativeName>
        <fullName evidence="1">4-diphosphocytidyl-2C-methyl-D-erythritol synthase</fullName>
    </alternativeName>
    <alternativeName>
        <fullName evidence="1">MEP cytidylyltransferase</fullName>
        <shortName evidence="1">MCT</shortName>
    </alternativeName>
</protein>
<keyword id="KW-0414">Isoprene biosynthesis</keyword>
<keyword id="KW-0548">Nucleotidyltransferase</keyword>
<keyword id="KW-0808">Transferase</keyword>
<dbReference type="EC" id="2.7.7.60" evidence="1"/>
<dbReference type="EMBL" id="CP000526">
    <property type="protein sequence ID" value="ABM50018.1"/>
    <property type="molecule type" value="Genomic_DNA"/>
</dbReference>
<dbReference type="RefSeq" id="WP_004191584.1">
    <property type="nucleotide sequence ID" value="NC_008785.1"/>
</dbReference>
<dbReference type="SMR" id="A1V500"/>
<dbReference type="GeneID" id="93060628"/>
<dbReference type="KEGG" id="bmv:BMASAVP1_A1987"/>
<dbReference type="HOGENOM" id="CLU_061281_3_0_4"/>
<dbReference type="UniPathway" id="UPA00056">
    <property type="reaction ID" value="UER00093"/>
</dbReference>
<dbReference type="GO" id="GO:0050518">
    <property type="term" value="F:2-C-methyl-D-erythritol 4-phosphate cytidylyltransferase activity"/>
    <property type="evidence" value="ECO:0007669"/>
    <property type="project" value="UniProtKB-UniRule"/>
</dbReference>
<dbReference type="GO" id="GO:0019288">
    <property type="term" value="P:isopentenyl diphosphate biosynthetic process, methylerythritol 4-phosphate pathway"/>
    <property type="evidence" value="ECO:0007669"/>
    <property type="project" value="UniProtKB-UniRule"/>
</dbReference>
<dbReference type="CDD" id="cd02516">
    <property type="entry name" value="CDP-ME_synthetase"/>
    <property type="match status" value="1"/>
</dbReference>
<dbReference type="FunFam" id="3.90.550.10:FF:000003">
    <property type="entry name" value="2-C-methyl-D-erythritol 4-phosphate cytidylyltransferase"/>
    <property type="match status" value="1"/>
</dbReference>
<dbReference type="Gene3D" id="3.90.550.10">
    <property type="entry name" value="Spore Coat Polysaccharide Biosynthesis Protein SpsA, Chain A"/>
    <property type="match status" value="1"/>
</dbReference>
<dbReference type="HAMAP" id="MF_00108">
    <property type="entry name" value="IspD"/>
    <property type="match status" value="1"/>
</dbReference>
<dbReference type="InterPro" id="IPR001228">
    <property type="entry name" value="IspD"/>
</dbReference>
<dbReference type="InterPro" id="IPR034683">
    <property type="entry name" value="IspD/TarI"/>
</dbReference>
<dbReference type="InterPro" id="IPR050088">
    <property type="entry name" value="IspD/TarI_cytidylyltransf_bact"/>
</dbReference>
<dbReference type="InterPro" id="IPR018294">
    <property type="entry name" value="ISPD_synthase_CS"/>
</dbReference>
<dbReference type="InterPro" id="IPR029044">
    <property type="entry name" value="Nucleotide-diphossugar_trans"/>
</dbReference>
<dbReference type="NCBIfam" id="TIGR00453">
    <property type="entry name" value="ispD"/>
    <property type="match status" value="1"/>
</dbReference>
<dbReference type="PANTHER" id="PTHR32125">
    <property type="entry name" value="2-C-METHYL-D-ERYTHRITOL 4-PHOSPHATE CYTIDYLYLTRANSFERASE, CHLOROPLASTIC"/>
    <property type="match status" value="1"/>
</dbReference>
<dbReference type="PANTHER" id="PTHR32125:SF4">
    <property type="entry name" value="2-C-METHYL-D-ERYTHRITOL 4-PHOSPHATE CYTIDYLYLTRANSFERASE, CHLOROPLASTIC"/>
    <property type="match status" value="1"/>
</dbReference>
<dbReference type="Pfam" id="PF01128">
    <property type="entry name" value="IspD"/>
    <property type="match status" value="1"/>
</dbReference>
<dbReference type="SUPFAM" id="SSF53448">
    <property type="entry name" value="Nucleotide-diphospho-sugar transferases"/>
    <property type="match status" value="1"/>
</dbReference>
<dbReference type="PROSITE" id="PS01295">
    <property type="entry name" value="ISPD"/>
    <property type="match status" value="1"/>
</dbReference>